<organism>
    <name type="scientific">Afipia carboxidovorans (strain ATCC 49405 / DSM 1227 / KCTC 32145 / OM5)</name>
    <name type="common">Oligotropha carboxidovorans</name>
    <dbReference type="NCBI Taxonomy" id="504832"/>
    <lineage>
        <taxon>Bacteria</taxon>
        <taxon>Pseudomonadati</taxon>
        <taxon>Pseudomonadota</taxon>
        <taxon>Alphaproteobacteria</taxon>
        <taxon>Hyphomicrobiales</taxon>
        <taxon>Nitrobacteraceae</taxon>
        <taxon>Afipia</taxon>
    </lineage>
</organism>
<dbReference type="EMBL" id="CP001196">
    <property type="protein sequence ID" value="ACI92236.1"/>
    <property type="molecule type" value="Genomic_DNA"/>
</dbReference>
<dbReference type="EMBL" id="CP002826">
    <property type="protein sequence ID" value="AEI07554.1"/>
    <property type="molecule type" value="Genomic_DNA"/>
</dbReference>
<dbReference type="RefSeq" id="WP_012562266.1">
    <property type="nucleotide sequence ID" value="NC_015684.1"/>
</dbReference>
<dbReference type="SMR" id="B6JC20"/>
<dbReference type="STRING" id="504832.OCA5_c28630"/>
<dbReference type="KEGG" id="oca:OCAR_5101"/>
<dbReference type="KEGG" id="ocg:OCA5_c28630"/>
<dbReference type="PATRIC" id="fig|504832.7.peg.3021"/>
<dbReference type="eggNOG" id="COG0828">
    <property type="taxonomic scope" value="Bacteria"/>
</dbReference>
<dbReference type="HOGENOM" id="CLU_159258_0_0_5"/>
<dbReference type="OrthoDB" id="9811907at2"/>
<dbReference type="Proteomes" id="UP000007730">
    <property type="component" value="Chromosome"/>
</dbReference>
<dbReference type="GO" id="GO:1990904">
    <property type="term" value="C:ribonucleoprotein complex"/>
    <property type="evidence" value="ECO:0007669"/>
    <property type="project" value="UniProtKB-KW"/>
</dbReference>
<dbReference type="GO" id="GO:0005840">
    <property type="term" value="C:ribosome"/>
    <property type="evidence" value="ECO:0007669"/>
    <property type="project" value="UniProtKB-KW"/>
</dbReference>
<dbReference type="GO" id="GO:0003735">
    <property type="term" value="F:structural constituent of ribosome"/>
    <property type="evidence" value="ECO:0007669"/>
    <property type="project" value="InterPro"/>
</dbReference>
<dbReference type="GO" id="GO:0006412">
    <property type="term" value="P:translation"/>
    <property type="evidence" value="ECO:0007669"/>
    <property type="project" value="UniProtKB-UniRule"/>
</dbReference>
<dbReference type="Gene3D" id="1.20.5.1150">
    <property type="entry name" value="Ribosomal protein S8"/>
    <property type="match status" value="1"/>
</dbReference>
<dbReference type="HAMAP" id="MF_00358">
    <property type="entry name" value="Ribosomal_bS21"/>
    <property type="match status" value="1"/>
</dbReference>
<dbReference type="InterPro" id="IPR001911">
    <property type="entry name" value="Ribosomal_bS21"/>
</dbReference>
<dbReference type="InterPro" id="IPR018278">
    <property type="entry name" value="Ribosomal_bS21_CS"/>
</dbReference>
<dbReference type="InterPro" id="IPR038380">
    <property type="entry name" value="Ribosomal_bS21_sf"/>
</dbReference>
<dbReference type="NCBIfam" id="TIGR00030">
    <property type="entry name" value="S21p"/>
    <property type="match status" value="1"/>
</dbReference>
<dbReference type="PANTHER" id="PTHR21109">
    <property type="entry name" value="MITOCHONDRIAL 28S RIBOSOMAL PROTEIN S21"/>
    <property type="match status" value="1"/>
</dbReference>
<dbReference type="PANTHER" id="PTHR21109:SF0">
    <property type="entry name" value="SMALL RIBOSOMAL SUBUNIT PROTEIN BS21M"/>
    <property type="match status" value="1"/>
</dbReference>
<dbReference type="Pfam" id="PF01165">
    <property type="entry name" value="Ribosomal_S21"/>
    <property type="match status" value="1"/>
</dbReference>
<dbReference type="PROSITE" id="PS01181">
    <property type="entry name" value="RIBOSOMAL_S21"/>
    <property type="match status" value="1"/>
</dbReference>
<proteinExistence type="inferred from homology"/>
<sequence length="96" mass="10743">MQVLVRDNNVDQALKALKKKMQREGIFREMKLRGHYEKPSEKKAREKAEAVRRARKLARKKLQREGLLPSKPKPVFGADRGRGAAGGAGGAPRPAR</sequence>
<reference key="1">
    <citation type="journal article" date="2008" name="J. Bacteriol.">
        <title>Genome sequence of the chemolithoautotrophic bacterium Oligotropha carboxidovorans OM5T.</title>
        <authorList>
            <person name="Paul D."/>
            <person name="Bridges S."/>
            <person name="Burgess S.C."/>
            <person name="Dandass Y."/>
            <person name="Lawrence M.L."/>
        </authorList>
    </citation>
    <scope>NUCLEOTIDE SEQUENCE [LARGE SCALE GENOMIC DNA]</scope>
    <source>
        <strain>ATCC 49405 / DSM 1227 / KCTC 32145 / OM5</strain>
    </source>
</reference>
<reference key="2">
    <citation type="journal article" date="2011" name="J. Bacteriol.">
        <title>Complete genome sequences of the chemolithoautotrophic Oligotropha carboxidovorans strains OM4 and OM5.</title>
        <authorList>
            <person name="Volland S."/>
            <person name="Rachinger M."/>
            <person name="Strittmatter A."/>
            <person name="Daniel R."/>
            <person name="Gottschalk G."/>
            <person name="Meyer O."/>
        </authorList>
    </citation>
    <scope>NUCLEOTIDE SEQUENCE [LARGE SCALE GENOMIC DNA]</scope>
    <source>
        <strain>ATCC 49405 / DSM 1227 / KCTC 32145 / OM5</strain>
    </source>
</reference>
<comment type="similarity">
    <text evidence="1">Belongs to the bacterial ribosomal protein bS21 family.</text>
</comment>
<accession>B6JC20</accession>
<accession>F8BWT4</accession>
<keyword id="KW-1185">Reference proteome</keyword>
<keyword id="KW-0687">Ribonucleoprotein</keyword>
<keyword id="KW-0689">Ribosomal protein</keyword>
<gene>
    <name evidence="1" type="primary">rpsU</name>
    <name type="ordered locus">OCAR_5101</name>
    <name type="ordered locus">OCA5_c28630</name>
</gene>
<evidence type="ECO:0000255" key="1">
    <source>
        <dbReference type="HAMAP-Rule" id="MF_00358"/>
    </source>
</evidence>
<evidence type="ECO:0000256" key="2">
    <source>
        <dbReference type="SAM" id="MobiDB-lite"/>
    </source>
</evidence>
<evidence type="ECO:0000305" key="3"/>
<feature type="chain" id="PRO_1000120642" description="Small ribosomal subunit protein bS21">
    <location>
        <begin position="1"/>
        <end position="96"/>
    </location>
</feature>
<feature type="region of interest" description="Disordered" evidence="2">
    <location>
        <begin position="37"/>
        <end position="96"/>
    </location>
</feature>
<feature type="compositionally biased region" description="Basic and acidic residues" evidence="2">
    <location>
        <begin position="37"/>
        <end position="52"/>
    </location>
</feature>
<feature type="compositionally biased region" description="Basic residues" evidence="2">
    <location>
        <begin position="53"/>
        <end position="62"/>
    </location>
</feature>
<protein>
    <recommendedName>
        <fullName evidence="1">Small ribosomal subunit protein bS21</fullName>
    </recommendedName>
    <alternativeName>
        <fullName evidence="3">30S ribosomal protein S21</fullName>
    </alternativeName>
</protein>
<name>RS21_AFIC5</name>